<gene>
    <name type="primary">aioA</name>
    <name type="synonym">aoxB</name>
    <name type="synonym">asoA</name>
</gene>
<sequence length="826" mass="92395">MSRPNDRITLPPANAQRTNMTCHFCIVGCGYHVYKWPELQEGGRAPEQNALGLDFRKQLPPLAVTLTPAMTNVVTEHNGRRYNIMVVPDKACVVNSGLSSTRGGKMASYMYTPTGDGKQRLKAPRLYAADQWVDTTWDHAMALYAGLIKKTLDKDGPQGVFFSCFDHGGAGGGFENTWGTGKLMFSAIQTPMVRIHNRPAYNSECHATREMGIGELNNAYEDAQLADVIWSIGNNPYESQTNYFLNHWLPNLQGATTSKKKERFPNENFPQARIIFVDPRETPSVAIARHVAGNDRVLHLAIEPGTDTALFNGLFTYVVEQGWIDKPFIEAHTKGFDDAVKTNRLSLDECSNITGVPVDMLKRAAEWSYKPKASGQAPRTMHAYEKGIIWGNDNYVIQSALLDLVIATHNVGRRGTGCVRMGGHQEGYTRPPYPGDKKIYIDQELIKGKGRIMTWWGCNNFQTSNNAQALREAILQRSAIVKQAMQKARGATTEEMVDVIYEATQNGGLFVTSINLYPTKLAEAAHLMLPAAHPGEMNLTSMNGERRIRLSEKFMDPPGTAMADCLIAARIANALRDMYQKDGKAEMAAQFEGFDWKTEEDAFNDGFRRAGQPGAPAIDSQGGSTGHLVTYDRLRKSGNNGVQLPVVSWDESKGLVGTEMLYTEGKFDTDDGKAHFKPAPWNGLPATVQQQKDKYRFWLNNGRNNEVWQTAYHDQYNSLMQERYPMAYIEMNPDDCKQLDVTGGDIVEVYNDFGSTFAMVYPVAEIKRGQTFMLFGYVNGIQGDVTTDWTDRNIIPYYKGTWGDIRKVGSMEEFKRTVSFKSRRFA</sequence>
<accession>Q7SIF4</accession>
<accession>Q6WB60</accession>
<accession>Q9R5F9</accession>
<organism>
    <name type="scientific">Alcaligenes faecalis</name>
    <dbReference type="NCBI Taxonomy" id="511"/>
    <lineage>
        <taxon>Bacteria</taxon>
        <taxon>Pseudomonadati</taxon>
        <taxon>Pseudomonadota</taxon>
        <taxon>Betaproteobacteria</taxon>
        <taxon>Burkholderiales</taxon>
        <taxon>Alcaligenaceae</taxon>
        <taxon>Alcaligenes</taxon>
    </lineage>
</organism>
<proteinExistence type="evidence at protein level"/>
<name>AIOA_ALCFA</name>
<reference key="1">
    <citation type="submission" date="2003-04" db="EMBL/GenBank/DDBJ databases">
        <title>Genes for arsenite oxidation from Alcaligenes faecalis.</title>
        <authorList>
            <person name="Silver S."/>
            <person name="Phung L.T."/>
            <person name="Malo B.J."/>
        </authorList>
    </citation>
    <scope>NUCLEOTIDE SEQUENCE [GENOMIC DNA]</scope>
    <source>
        <strain>CCUG 2071 / LMG 3368 / NCIMB 8687</strain>
    </source>
</reference>
<reference evidence="4 5" key="2">
    <citation type="journal article" date="2001" name="Structure">
        <title>Crystal structure of the 100 kDa arsenite oxidase from Alcaligenes faecalis in two crystal forms at 1.64 A and 2.03 A.</title>
        <authorList>
            <person name="Ellis P.J."/>
            <person name="Conrads T."/>
            <person name="Hille R."/>
            <person name="Kuhn P."/>
        </authorList>
    </citation>
    <scope>PROTEIN SEQUENCE OF 2-826</scope>
    <scope>X-RAY CRYSTALLOGRAPHY (1.64 ANGSTROMS) IN COMPLEX WITH MO-BIS-MGD AND IRON-SULFUR CLUSTER</scope>
    <scope>COFACTOR</scope>
    <source>
        <strain>CCUG 2071 / LMG 3368 / NCIMB 8687</strain>
    </source>
</reference>
<reference key="3">
    <citation type="journal article" date="1992" name="J. Biol. Chem.">
        <title>The purification and characterization of arsenite oxidase from Alcaligenes faecalis, a molybdenum-containing hydroxylase.</title>
        <authorList>
            <person name="Anderson G.L."/>
            <person name="Williams J."/>
            <person name="Hille R."/>
        </authorList>
    </citation>
    <scope>PROTEIN SEQUENCE OF 2-18</scope>
    <source>
        <strain>CCUG 2071 / LMG 3368 / NCIMB 8687</strain>
    </source>
</reference>
<reference key="4">
    <citation type="journal article" date="2012" name="J. Bacteriol.">
        <title>Unified nomenclature for genes involved in prokaryotic aerobic arsenite oxidation.</title>
        <authorList>
            <person name="Lett M.C."/>
            <person name="Muller D."/>
            <person name="Lievremont D."/>
            <person name="Silver S."/>
            <person name="Santini J."/>
        </authorList>
    </citation>
    <scope>NOMENCLATURE</scope>
</reference>
<dbReference type="EC" id="1.20.9.1"/>
<dbReference type="EMBL" id="AY297781">
    <property type="protein sequence ID" value="AAQ19838.1"/>
    <property type="molecule type" value="Genomic_DNA"/>
</dbReference>
<dbReference type="PIR" id="B45138">
    <property type="entry name" value="B45138"/>
</dbReference>
<dbReference type="PDB" id="1G8J">
    <property type="method" value="X-ray"/>
    <property type="resolution" value="2.03 A"/>
    <property type="chains" value="A/C=4-825"/>
</dbReference>
<dbReference type="PDB" id="1G8K">
    <property type="method" value="X-ray"/>
    <property type="resolution" value="1.64 A"/>
    <property type="chains" value="A/C/E/G=4-825"/>
</dbReference>
<dbReference type="PDB" id="8CFF">
    <property type="method" value="X-ray"/>
    <property type="resolution" value="1.57 A"/>
    <property type="chains" value="A/C/E/G=4-826"/>
</dbReference>
<dbReference type="PDB" id="8CGS">
    <property type="method" value="X-ray"/>
    <property type="resolution" value="1.84 A"/>
    <property type="chains" value="A/C/E/G=5-826"/>
</dbReference>
<dbReference type="PDB" id="8CH9">
    <property type="method" value="X-ray"/>
    <property type="resolution" value="1.43 A"/>
    <property type="chains" value="A/C/E/G=4-826"/>
</dbReference>
<dbReference type="PDBsum" id="1G8J"/>
<dbReference type="PDBsum" id="1G8K"/>
<dbReference type="PDBsum" id="8CFF"/>
<dbReference type="PDBsum" id="8CGS"/>
<dbReference type="PDBsum" id="8CH9"/>
<dbReference type="SMR" id="Q7SIF4"/>
<dbReference type="TCDB" id="5.A.3.6.1">
    <property type="family name" value="the prokaryotic molybdopterin-containing oxidoreductase (pmo) family"/>
</dbReference>
<dbReference type="KEGG" id="ag:AAQ19838"/>
<dbReference type="BioCyc" id="MetaCyc:MONOMER-10727"/>
<dbReference type="BRENDA" id="1.20.9.1">
    <property type="organism ID" value="232"/>
</dbReference>
<dbReference type="EvolutionaryTrace" id="Q7SIF4"/>
<dbReference type="GO" id="GO:0016020">
    <property type="term" value="C:membrane"/>
    <property type="evidence" value="ECO:0007669"/>
    <property type="project" value="TreeGrafter"/>
</dbReference>
<dbReference type="GO" id="GO:1990204">
    <property type="term" value="C:oxidoreductase complex"/>
    <property type="evidence" value="ECO:0007669"/>
    <property type="project" value="UniProtKB-ARBA"/>
</dbReference>
<dbReference type="GO" id="GO:0051538">
    <property type="term" value="F:3 iron, 4 sulfur cluster binding"/>
    <property type="evidence" value="ECO:0007669"/>
    <property type="project" value="UniProtKB-KW"/>
</dbReference>
<dbReference type="GO" id="GO:0050611">
    <property type="term" value="F:arsenate reductase (azurin) activity"/>
    <property type="evidence" value="ECO:0007669"/>
    <property type="project" value="UniProtKB-EC"/>
</dbReference>
<dbReference type="GO" id="GO:0046872">
    <property type="term" value="F:metal ion binding"/>
    <property type="evidence" value="ECO:0007669"/>
    <property type="project" value="UniProtKB-KW"/>
</dbReference>
<dbReference type="GO" id="GO:0043546">
    <property type="term" value="F:molybdopterin cofactor binding"/>
    <property type="evidence" value="ECO:0007669"/>
    <property type="project" value="InterPro"/>
</dbReference>
<dbReference type="GO" id="GO:0003954">
    <property type="term" value="F:NADH dehydrogenase activity"/>
    <property type="evidence" value="ECO:0007669"/>
    <property type="project" value="TreeGrafter"/>
</dbReference>
<dbReference type="GO" id="GO:0022904">
    <property type="term" value="P:respiratory electron transport chain"/>
    <property type="evidence" value="ECO:0007669"/>
    <property type="project" value="TreeGrafter"/>
</dbReference>
<dbReference type="CDD" id="cd02756">
    <property type="entry name" value="MopB_Arsenite-Ox"/>
    <property type="match status" value="1"/>
</dbReference>
<dbReference type="CDD" id="cd02779">
    <property type="entry name" value="MopB_CT_Arsenite-Ox"/>
    <property type="match status" value="1"/>
</dbReference>
<dbReference type="Gene3D" id="2.40.40.20">
    <property type="match status" value="1"/>
</dbReference>
<dbReference type="Gene3D" id="3.30.200.200">
    <property type="match status" value="1"/>
</dbReference>
<dbReference type="Gene3D" id="3.40.50.740">
    <property type="match status" value="1"/>
</dbReference>
<dbReference type="Gene3D" id="3.40.228.10">
    <property type="entry name" value="Dimethylsulfoxide Reductase, domain 2"/>
    <property type="match status" value="1"/>
</dbReference>
<dbReference type="InterPro" id="IPR041632">
    <property type="entry name" value="AioA/IdrA_3Fe-4S"/>
</dbReference>
<dbReference type="InterPro" id="IPR014066">
    <property type="entry name" value="AioA/IdrA_lsu"/>
</dbReference>
<dbReference type="InterPro" id="IPR009010">
    <property type="entry name" value="Asp_de-COase-like_dom_sf"/>
</dbReference>
<dbReference type="InterPro" id="IPR006657">
    <property type="entry name" value="MoPterin_dinucl-bd_dom"/>
</dbReference>
<dbReference type="InterPro" id="IPR006656">
    <property type="entry name" value="Mopterin_OxRdtase"/>
</dbReference>
<dbReference type="InterPro" id="IPR050123">
    <property type="entry name" value="Prok_molybdopt-oxidoreductase"/>
</dbReference>
<dbReference type="NCBIfam" id="TIGR02693">
    <property type="entry name" value="arsenite_ox_L"/>
    <property type="match status" value="1"/>
</dbReference>
<dbReference type="PANTHER" id="PTHR43105:SF10">
    <property type="entry name" value="NADH-QUINONE OXIDOREDUCTASE SUBUNIT G"/>
    <property type="match status" value="1"/>
</dbReference>
<dbReference type="PANTHER" id="PTHR43105">
    <property type="entry name" value="RESPIRATORY NITRATE REDUCTASE"/>
    <property type="match status" value="1"/>
</dbReference>
<dbReference type="Pfam" id="PF00384">
    <property type="entry name" value="Molybdopterin"/>
    <property type="match status" value="1"/>
</dbReference>
<dbReference type="Pfam" id="PF01568">
    <property type="entry name" value="Molydop_binding"/>
    <property type="match status" value="1"/>
</dbReference>
<dbReference type="Pfam" id="PF18465">
    <property type="entry name" value="Rieske_3"/>
    <property type="match status" value="1"/>
</dbReference>
<dbReference type="SUPFAM" id="SSF50692">
    <property type="entry name" value="ADC-like"/>
    <property type="match status" value="1"/>
</dbReference>
<dbReference type="SUPFAM" id="SSF53706">
    <property type="entry name" value="Formate dehydrogenase/DMSO reductase, domains 1-3"/>
    <property type="match status" value="1"/>
</dbReference>
<comment type="function">
    <text>Involved in the detoxification of arsenic. Oxidizes As(III)O3(3-) (arsenite) to the somewhat less toxic As(V)O4(3-) (arsenate).</text>
</comment>
<comment type="catalytic activity">
    <reaction>
        <text>2 oxidized [azurin] + arsenite + H2O = 2 reduced [azurin] + arsenate + 3 H(+)</text>
        <dbReference type="Rhea" id="RHEA:18701"/>
        <dbReference type="Rhea" id="RHEA-COMP:11034"/>
        <dbReference type="Rhea" id="RHEA-COMP:11035"/>
        <dbReference type="ChEBI" id="CHEBI:15377"/>
        <dbReference type="ChEBI" id="CHEBI:15378"/>
        <dbReference type="ChEBI" id="CHEBI:29036"/>
        <dbReference type="ChEBI" id="CHEBI:29242"/>
        <dbReference type="ChEBI" id="CHEBI:48597"/>
        <dbReference type="ChEBI" id="CHEBI:49552"/>
        <dbReference type="EC" id="1.20.9.1"/>
    </reaction>
</comment>
<comment type="cofactor">
    <cofactor evidence="1">
        <name>[3Fe-4S] cluster</name>
        <dbReference type="ChEBI" id="CHEBI:21137"/>
    </cofactor>
    <text evidence="1">Binds 1 [3Fe-4S] cluster per subunit.</text>
</comment>
<comment type="cofactor">
    <cofactor evidence="1">
        <name>Mo-bis(molybdopterin guanine dinucleotide)</name>
        <dbReference type="ChEBI" id="CHEBI:60539"/>
    </cofactor>
    <text evidence="1">Binds 1 molybdenum-bis(molybdopterin guanine dinucleotide) (Mo-bis-MGD) cofactor per subunit.</text>
</comment>
<comment type="subunit">
    <text evidence="1">Heterodimer consisting of a large and a small subunit.</text>
</comment>
<comment type="similarity">
    <text evidence="3">Belongs to the prokaryotic molybdopterin-containing oxidoreductase family.</text>
</comment>
<feature type="initiator methionine" description="Removed" evidence="1 2">
    <location>
        <position position="1"/>
    </location>
</feature>
<feature type="chain" id="PRO_0000063240" description="Arsenite oxidase subunit AioA">
    <location>
        <begin position="2"/>
        <end position="826"/>
    </location>
</feature>
<feature type="binding site" evidence="1 4 5">
    <location>
        <position position="22"/>
    </location>
    <ligand>
        <name>[3Fe-4S] cluster</name>
        <dbReference type="ChEBI" id="CHEBI:21137"/>
    </ligand>
</feature>
<feature type="binding site" evidence="1 4 5">
    <location>
        <position position="25"/>
    </location>
    <ligand>
        <name>[3Fe-4S] cluster</name>
        <dbReference type="ChEBI" id="CHEBI:21137"/>
    </ligand>
</feature>
<feature type="binding site" evidence="1 4 5">
    <location>
        <position position="29"/>
    </location>
    <ligand>
        <name>[3Fe-4S] cluster</name>
        <dbReference type="ChEBI" id="CHEBI:21137"/>
    </ligand>
</feature>
<feature type="binding site">
    <location>
        <position position="196"/>
    </location>
    <ligand>
        <name>substrate</name>
    </ligand>
</feature>
<feature type="binding site">
    <location>
        <position position="204"/>
    </location>
    <ligand>
        <name>substrate</name>
    </ligand>
</feature>
<feature type="binding site">
    <location>
        <position position="420"/>
    </location>
    <ligand>
        <name>substrate</name>
    </ligand>
</feature>
<feature type="binding site">
    <location>
        <position position="424"/>
    </location>
    <ligand>
        <name>substrate</name>
    </ligand>
</feature>
<feature type="site" description="Involved in charge transfer" evidence="3">
    <location>
        <position position="100"/>
    </location>
</feature>
<feature type="sequence conflict" description="In Ref. 2; AA sequence and 3; AA sequence." evidence="3" ref="2 3">
    <original>SR</original>
    <variation>GC</variation>
    <location>
        <begin position="2"/>
        <end position="3"/>
    </location>
</feature>
<feature type="sequence conflict" description="In Ref. 2; AA sequence." evidence="3" ref="2">
    <original>Q</original>
    <variation>E</variation>
    <location>
        <position position="40"/>
    </location>
</feature>
<feature type="sequence conflict" description="In Ref. 2; AA sequence." evidence="3" ref="2">
    <original>V</original>
    <variation>S</variation>
    <location>
        <position position="64"/>
    </location>
</feature>
<feature type="sequence conflict" description="In Ref. 2; AA sequence." evidence="3" ref="2">
    <original>NGRRYN</original>
    <variation>DGARYD</variation>
    <location>
        <begin position="78"/>
        <end position="83"/>
    </location>
</feature>
<feature type="sequence conflict" description="In Ref. 2; AA sequence." evidence="3" ref="2">
    <original>Q</original>
    <variation>E</variation>
    <location>
        <position position="119"/>
    </location>
</feature>
<feature type="sequence conflict" description="In Ref. 2; AA sequence." evidence="3" ref="2">
    <original>K</original>
    <variation>S</variation>
    <location>
        <position position="122"/>
    </location>
</feature>
<feature type="sequence conflict" description="In Ref. 2; AA sequence." evidence="3" ref="2">
    <original>Q</original>
    <variation>E</variation>
    <location>
        <position position="131"/>
    </location>
</feature>
<feature type="sequence conflict" description="In Ref. 2; AA sequence." evidence="3" ref="2">
    <original>K</original>
    <variation>S</variation>
    <location>
        <position position="154"/>
    </location>
</feature>
<feature type="sequence conflict" description="In Ref. 2; AA sequence." evidence="3" ref="2">
    <original>N</original>
    <variation>D</variation>
    <location>
        <position position="793"/>
    </location>
</feature>
<feature type="sequence conflict" description="In Ref. 2; AA sequence." evidence="3" ref="2">
    <original>E</original>
    <variation>S</variation>
    <location>
        <position position="812"/>
    </location>
</feature>
<feature type="sequence conflict" description="In Ref. 2; AA sequence." evidence="3" ref="2">
    <original>A</original>
    <variation>G</variation>
    <location>
        <position position="826"/>
    </location>
</feature>
<feature type="strand" evidence="8">
    <location>
        <begin position="16"/>
        <end position="21"/>
    </location>
</feature>
<feature type="strand" evidence="8">
    <location>
        <begin position="23"/>
        <end position="25"/>
    </location>
</feature>
<feature type="strand" evidence="8">
    <location>
        <begin position="30"/>
        <end position="37"/>
    </location>
</feature>
<feature type="helix" evidence="8">
    <location>
        <begin position="46"/>
        <end position="48"/>
    </location>
</feature>
<feature type="helix" evidence="8">
    <location>
        <begin position="68"/>
        <end position="70"/>
    </location>
</feature>
<feature type="strand" evidence="8">
    <location>
        <begin position="71"/>
        <end position="75"/>
    </location>
</feature>
<feature type="strand" evidence="8">
    <location>
        <begin position="81"/>
        <end position="88"/>
    </location>
</feature>
<feature type="turn" evidence="8">
    <location>
        <begin position="93"/>
        <end position="97"/>
    </location>
</feature>
<feature type="helix" evidence="8">
    <location>
        <begin position="103"/>
        <end position="105"/>
    </location>
</feature>
<feature type="helix" evidence="8">
    <location>
        <begin position="106"/>
        <end position="109"/>
    </location>
</feature>
<feature type="strand" evidence="8">
    <location>
        <begin position="113"/>
        <end position="115"/>
    </location>
</feature>
<feature type="turn" evidence="8">
    <location>
        <begin position="116"/>
        <end position="119"/>
    </location>
</feature>
<feature type="strand" evidence="8">
    <location>
        <begin position="125"/>
        <end position="128"/>
    </location>
</feature>
<feature type="strand" evidence="8">
    <location>
        <begin position="131"/>
        <end position="134"/>
    </location>
</feature>
<feature type="helix" evidence="8">
    <location>
        <begin position="137"/>
        <end position="154"/>
    </location>
</feature>
<feature type="helix" evidence="8">
    <location>
        <begin position="157"/>
        <end position="159"/>
    </location>
</feature>
<feature type="strand" evidence="8">
    <location>
        <begin position="160"/>
        <end position="164"/>
    </location>
</feature>
<feature type="helix" evidence="8">
    <location>
        <begin position="174"/>
        <end position="185"/>
    </location>
</feature>
<feature type="turn" evidence="7">
    <location>
        <begin position="186"/>
        <end position="188"/>
    </location>
</feature>
<feature type="strand" evidence="8">
    <location>
        <begin position="193"/>
        <end position="195"/>
    </location>
</feature>
<feature type="strand" evidence="8">
    <location>
        <begin position="198"/>
        <end position="201"/>
    </location>
</feature>
<feature type="helix" evidence="8">
    <location>
        <begin position="206"/>
        <end position="211"/>
    </location>
</feature>
<feature type="helix" evidence="8">
    <location>
        <begin position="220"/>
        <end position="225"/>
    </location>
</feature>
<feature type="strand" evidence="8">
    <location>
        <begin position="227"/>
        <end position="233"/>
    </location>
</feature>
<feature type="helix" evidence="8">
    <location>
        <begin position="236"/>
        <end position="239"/>
    </location>
</feature>
<feature type="helix" evidence="8">
    <location>
        <begin position="241"/>
        <end position="246"/>
    </location>
</feature>
<feature type="helix" evidence="8">
    <location>
        <begin position="248"/>
        <end position="252"/>
    </location>
</feature>
<feature type="turn" evidence="8">
    <location>
        <begin position="253"/>
        <end position="256"/>
    </location>
</feature>
<feature type="helix" evidence="8">
    <location>
        <begin position="257"/>
        <end position="263"/>
    </location>
</feature>
<feature type="strand" evidence="8">
    <location>
        <begin position="273"/>
        <end position="277"/>
    </location>
</feature>
<feature type="helix" evidence="8">
    <location>
        <begin position="283"/>
        <end position="292"/>
    </location>
</feature>
<feature type="helix" evidence="8">
    <location>
        <begin position="294"/>
        <end position="296"/>
    </location>
</feature>
<feature type="strand" evidence="8">
    <location>
        <begin position="297"/>
        <end position="300"/>
    </location>
</feature>
<feature type="helix" evidence="8">
    <location>
        <begin position="307"/>
        <end position="321"/>
    </location>
</feature>
<feature type="helix" evidence="8">
    <location>
        <begin position="326"/>
        <end position="332"/>
    </location>
</feature>
<feature type="helix" evidence="8">
    <location>
        <begin position="336"/>
        <end position="342"/>
    </location>
</feature>
<feature type="helix" evidence="8">
    <location>
        <begin position="347"/>
        <end position="354"/>
    </location>
</feature>
<feature type="helix" evidence="8">
    <location>
        <begin position="358"/>
        <end position="369"/>
    </location>
</feature>
<feature type="strand" evidence="8">
    <location>
        <begin position="380"/>
        <end position="384"/>
    </location>
</feature>
<feature type="helix" evidence="8">
    <location>
        <begin position="386"/>
        <end position="389"/>
    </location>
</feature>
<feature type="helix" evidence="8">
    <location>
        <begin position="394"/>
        <end position="407"/>
    </location>
</feature>
<feature type="strand" evidence="8">
    <location>
        <begin position="411"/>
        <end position="413"/>
    </location>
</feature>
<feature type="strand" evidence="8">
    <location>
        <begin position="418"/>
        <end position="420"/>
    </location>
</feature>
<feature type="helix" evidence="8">
    <location>
        <begin position="441"/>
        <end position="446"/>
    </location>
</feature>
<feature type="strand" evidence="8">
    <location>
        <begin position="451"/>
        <end position="457"/>
    </location>
</feature>
<feature type="helix" evidence="8">
    <location>
        <begin position="460"/>
        <end position="463"/>
    </location>
</feature>
<feature type="helix" evidence="8">
    <location>
        <begin position="467"/>
        <end position="486"/>
    </location>
</feature>
<feature type="turn" evidence="6">
    <location>
        <begin position="488"/>
        <end position="490"/>
    </location>
</feature>
<feature type="helix" evidence="8">
    <location>
        <begin position="493"/>
        <end position="505"/>
    </location>
</feature>
<feature type="strand" evidence="8">
    <location>
        <begin position="510"/>
        <end position="517"/>
    </location>
</feature>
<feature type="helix" evidence="8">
    <location>
        <begin position="520"/>
        <end position="523"/>
    </location>
</feature>
<feature type="strand" evidence="8">
    <location>
        <begin position="526"/>
        <end position="531"/>
    </location>
</feature>
<feature type="strand" evidence="8">
    <location>
        <begin position="539"/>
        <end position="542"/>
    </location>
</feature>
<feature type="strand" evidence="8">
    <location>
        <begin position="547"/>
        <end position="551"/>
    </location>
</feature>
<feature type="helix" evidence="8">
    <location>
        <begin position="564"/>
        <end position="581"/>
    </location>
</feature>
<feature type="helix" evidence="8">
    <location>
        <begin position="585"/>
        <end position="590"/>
    </location>
</feature>
<feature type="helix" evidence="8">
    <location>
        <begin position="599"/>
        <end position="605"/>
    </location>
</feature>
<feature type="turn" evidence="8">
    <location>
        <begin position="606"/>
        <end position="611"/>
    </location>
</feature>
<feature type="helix" evidence="8">
    <location>
        <begin position="623"/>
        <end position="628"/>
    </location>
</feature>
<feature type="helix" evidence="8">
    <location>
        <begin position="631"/>
        <end position="637"/>
    </location>
</feature>
<feature type="helix" evidence="8">
    <location>
        <begin position="638"/>
        <end position="640"/>
    </location>
</feature>
<feature type="strand" evidence="8">
    <location>
        <begin position="642"/>
        <end position="645"/>
    </location>
</feature>
<feature type="strand" evidence="8">
    <location>
        <begin position="648"/>
        <end position="650"/>
    </location>
</feature>
<feature type="turn" evidence="8">
    <location>
        <begin position="651"/>
        <end position="653"/>
    </location>
</feature>
<feature type="strand" evidence="8">
    <location>
        <begin position="654"/>
        <end position="656"/>
    </location>
</feature>
<feature type="strand" evidence="6">
    <location>
        <begin position="659"/>
        <end position="661"/>
    </location>
</feature>
<feature type="strand" evidence="8">
    <location>
        <begin position="672"/>
        <end position="675"/>
    </location>
</feature>
<feature type="helix" evidence="8">
    <location>
        <begin position="686"/>
        <end position="694"/>
    </location>
</feature>
<feature type="strand" evidence="8">
    <location>
        <begin position="696"/>
        <end position="702"/>
    </location>
</feature>
<feature type="helix" evidence="8">
    <location>
        <begin position="714"/>
        <end position="716"/>
    </location>
</feature>
<feature type="helix" evidence="8">
    <location>
        <begin position="718"/>
        <end position="723"/>
    </location>
</feature>
<feature type="strand" evidence="8">
    <location>
        <begin position="728"/>
        <end position="731"/>
    </location>
</feature>
<feature type="helix" evidence="8">
    <location>
        <begin position="733"/>
        <end position="738"/>
    </location>
</feature>
<feature type="strand" evidence="8">
    <location>
        <begin position="745"/>
        <end position="750"/>
    </location>
</feature>
<feature type="strand" evidence="8">
    <location>
        <begin position="755"/>
        <end position="762"/>
    </location>
</feature>
<feature type="strand" evidence="8">
    <location>
        <begin position="770"/>
        <end position="774"/>
    </location>
</feature>
<feature type="strand" evidence="8">
    <location>
        <begin position="778"/>
        <end position="780"/>
    </location>
</feature>
<feature type="helix" evidence="8">
    <location>
        <begin position="782"/>
        <end position="785"/>
    </location>
</feature>
<feature type="strand" evidence="8">
    <location>
        <begin position="802"/>
        <end position="810"/>
    </location>
</feature>
<feature type="helix" evidence="8">
    <location>
        <begin position="812"/>
        <end position="817"/>
    </location>
</feature>
<protein>
    <recommendedName>
        <fullName>Arsenite oxidase subunit AioA</fullName>
        <shortName>AOI</shortName>
        <ecNumber>1.20.9.1</ecNumber>
    </recommendedName>
    <alternativeName>
        <fullName>Arsenite oxidase Mo-pterin subunit</fullName>
    </alternativeName>
</protein>
<evidence type="ECO:0000269" key="1">
    <source>
    </source>
</evidence>
<evidence type="ECO:0000269" key="2">
    <source>
    </source>
</evidence>
<evidence type="ECO:0000305" key="3"/>
<evidence type="ECO:0007744" key="4">
    <source>
        <dbReference type="PDB" id="1G8J"/>
    </source>
</evidence>
<evidence type="ECO:0007744" key="5">
    <source>
        <dbReference type="PDB" id="1G8K"/>
    </source>
</evidence>
<evidence type="ECO:0007829" key="6">
    <source>
        <dbReference type="PDB" id="1G8J"/>
    </source>
</evidence>
<evidence type="ECO:0007829" key="7">
    <source>
        <dbReference type="PDB" id="1G8K"/>
    </source>
</evidence>
<evidence type="ECO:0007829" key="8">
    <source>
        <dbReference type="PDB" id="8CH9"/>
    </source>
</evidence>
<keyword id="KW-0002">3D-structure</keyword>
<keyword id="KW-0003">3Fe-4S</keyword>
<keyword id="KW-0903">Direct protein sequencing</keyword>
<keyword id="KW-0408">Iron</keyword>
<keyword id="KW-0411">Iron-sulfur</keyword>
<keyword id="KW-0479">Metal-binding</keyword>
<keyword id="KW-0500">Molybdenum</keyword>
<keyword id="KW-0560">Oxidoreductase</keyword>